<reference key="1">
    <citation type="journal article" date="2002" name="Nature">
        <title>The genome sequence of Schizosaccharomyces pombe.</title>
        <authorList>
            <person name="Wood V."/>
            <person name="Gwilliam R."/>
            <person name="Rajandream M.A."/>
            <person name="Lyne M.H."/>
            <person name="Lyne R."/>
            <person name="Stewart A."/>
            <person name="Sgouros J.G."/>
            <person name="Peat N."/>
            <person name="Hayles J."/>
            <person name="Baker S.G."/>
            <person name="Basham D."/>
            <person name="Bowman S."/>
            <person name="Brooks K."/>
            <person name="Brown D."/>
            <person name="Brown S."/>
            <person name="Chillingworth T."/>
            <person name="Churcher C.M."/>
            <person name="Collins M."/>
            <person name="Connor R."/>
            <person name="Cronin A."/>
            <person name="Davis P."/>
            <person name="Feltwell T."/>
            <person name="Fraser A."/>
            <person name="Gentles S."/>
            <person name="Goble A."/>
            <person name="Hamlin N."/>
            <person name="Harris D.E."/>
            <person name="Hidalgo J."/>
            <person name="Hodgson G."/>
            <person name="Holroyd S."/>
            <person name="Hornsby T."/>
            <person name="Howarth S."/>
            <person name="Huckle E.J."/>
            <person name="Hunt S."/>
            <person name="Jagels K."/>
            <person name="James K.D."/>
            <person name="Jones L."/>
            <person name="Jones M."/>
            <person name="Leather S."/>
            <person name="McDonald S."/>
            <person name="McLean J."/>
            <person name="Mooney P."/>
            <person name="Moule S."/>
            <person name="Mungall K.L."/>
            <person name="Murphy L.D."/>
            <person name="Niblett D."/>
            <person name="Odell C."/>
            <person name="Oliver K."/>
            <person name="O'Neil S."/>
            <person name="Pearson D."/>
            <person name="Quail M.A."/>
            <person name="Rabbinowitsch E."/>
            <person name="Rutherford K.M."/>
            <person name="Rutter S."/>
            <person name="Saunders D."/>
            <person name="Seeger K."/>
            <person name="Sharp S."/>
            <person name="Skelton J."/>
            <person name="Simmonds M.N."/>
            <person name="Squares R."/>
            <person name="Squares S."/>
            <person name="Stevens K."/>
            <person name="Taylor K."/>
            <person name="Taylor R.G."/>
            <person name="Tivey A."/>
            <person name="Walsh S.V."/>
            <person name="Warren T."/>
            <person name="Whitehead S."/>
            <person name="Woodward J.R."/>
            <person name="Volckaert G."/>
            <person name="Aert R."/>
            <person name="Robben J."/>
            <person name="Grymonprez B."/>
            <person name="Weltjens I."/>
            <person name="Vanstreels E."/>
            <person name="Rieger M."/>
            <person name="Schaefer M."/>
            <person name="Mueller-Auer S."/>
            <person name="Gabel C."/>
            <person name="Fuchs M."/>
            <person name="Duesterhoeft A."/>
            <person name="Fritzc C."/>
            <person name="Holzer E."/>
            <person name="Moestl D."/>
            <person name="Hilbert H."/>
            <person name="Borzym K."/>
            <person name="Langer I."/>
            <person name="Beck A."/>
            <person name="Lehrach H."/>
            <person name="Reinhardt R."/>
            <person name="Pohl T.M."/>
            <person name="Eger P."/>
            <person name="Zimmermann W."/>
            <person name="Wedler H."/>
            <person name="Wambutt R."/>
            <person name="Purnelle B."/>
            <person name="Goffeau A."/>
            <person name="Cadieu E."/>
            <person name="Dreano S."/>
            <person name="Gloux S."/>
            <person name="Lelaure V."/>
            <person name="Mottier S."/>
            <person name="Galibert F."/>
            <person name="Aves S.J."/>
            <person name="Xiang Z."/>
            <person name="Hunt C."/>
            <person name="Moore K."/>
            <person name="Hurst S.M."/>
            <person name="Lucas M."/>
            <person name="Rochet M."/>
            <person name="Gaillardin C."/>
            <person name="Tallada V.A."/>
            <person name="Garzon A."/>
            <person name="Thode G."/>
            <person name="Daga R.R."/>
            <person name="Cruzado L."/>
            <person name="Jimenez J."/>
            <person name="Sanchez M."/>
            <person name="del Rey F."/>
            <person name="Benito J."/>
            <person name="Dominguez A."/>
            <person name="Revuelta J.L."/>
            <person name="Moreno S."/>
            <person name="Armstrong J."/>
            <person name="Forsburg S.L."/>
            <person name="Cerutti L."/>
            <person name="Lowe T."/>
            <person name="McCombie W.R."/>
            <person name="Paulsen I."/>
            <person name="Potashkin J."/>
            <person name="Shpakovski G.V."/>
            <person name="Ussery D."/>
            <person name="Barrell B.G."/>
            <person name="Nurse P."/>
        </authorList>
    </citation>
    <scope>NUCLEOTIDE SEQUENCE [LARGE SCALE GENOMIC DNA]</scope>
    <source>
        <strain>972 / ATCC 24843</strain>
    </source>
</reference>
<reference key="2">
    <citation type="journal article" date="2001" name="Curr. Genet.">
        <title>Fission yeast tor1 functions in response to various stresses including nitrogen starvation, high osmolarity, and high temperature.</title>
        <authorList>
            <person name="Kawai M."/>
            <person name="Nakashima A."/>
            <person name="Ueno M."/>
            <person name="Ushimaru T."/>
            <person name="Aiba K."/>
            <person name="Doi H."/>
            <person name="Uritani M."/>
        </authorList>
    </citation>
    <scope>FUNCTION</scope>
</reference>
<reference key="3">
    <citation type="journal article" date="2001" name="J. Biol. Chem.">
        <title>The fission yeast TOR homolog, tor1+, is required for the response to starvation and other stresses via a conserved serine.</title>
        <authorList>
            <person name="Weisman R."/>
            <person name="Choder M."/>
        </authorList>
    </citation>
    <scope>IDENTIFICATION</scope>
    <scope>FUNCTION</scope>
    <scope>INDUCTION</scope>
</reference>
<reference key="4">
    <citation type="journal article" date="2003" name="EMBO J.">
        <title>Schizosaccharomyces pombe AGC family kinase Gad8p forms a conserved signaling module with TOR and PDK1-like kinases.</title>
        <authorList>
            <person name="Matsuo T."/>
            <person name="Kubo Y."/>
            <person name="Watanabe Y."/>
            <person name="Yamamoto M."/>
        </authorList>
    </citation>
    <scope>FUNCTION</scope>
    <scope>CATALYTIC ACTIVITY</scope>
</reference>
<reference key="5">
    <citation type="journal article" date="2005" name="Genetics">
        <title>Regulation of leucine uptake by tor1+ in Schizosaccharomyces pombe is sensitive to rapamycin.</title>
        <authorList>
            <person name="Weisman R."/>
            <person name="Roitburg I."/>
            <person name="Nahari T."/>
            <person name="Kupiec M."/>
        </authorList>
    </citation>
    <scope>FUNCTION</scope>
</reference>
<reference key="6">
    <citation type="journal article" date="2006" name="J. Cell Sci.">
        <title>Fission yeast Tor2 promotes cell growth and represses cell differentiation.</title>
        <authorList>
            <person name="Alvarez B."/>
            <person name="Moreno S."/>
        </authorList>
    </citation>
    <scope>INTERACTION WITH POP3 AND STE20</scope>
</reference>
<reference key="7">
    <citation type="journal article" date="2006" name="Nat. Biotechnol.">
        <title>ORFeome cloning and global analysis of protein localization in the fission yeast Schizosaccharomyces pombe.</title>
        <authorList>
            <person name="Matsuyama A."/>
            <person name="Arai R."/>
            <person name="Yashiroda Y."/>
            <person name="Shirai A."/>
            <person name="Kamata A."/>
            <person name="Sekido S."/>
            <person name="Kobayashi Y."/>
            <person name="Hashimoto A."/>
            <person name="Hamamoto M."/>
            <person name="Hiraoka Y."/>
            <person name="Horinouchi S."/>
            <person name="Yoshida M."/>
        </authorList>
    </citation>
    <scope>SUBCELLULAR LOCATION [LARGE SCALE ANALYSIS]</scope>
</reference>
<reference key="8">
    <citation type="journal article" date="2007" name="Genes Cells">
        <title>Rapamycin sensitivity of the Schizosaccharomyces pombe tor2 mutant and organization of two highly phosphorylated TOR complexes by specific and common subunits.</title>
        <authorList>
            <person name="Hayashi T."/>
            <person name="Hatanaka M."/>
            <person name="Nagao K."/>
            <person name="Nakaseko Y."/>
            <person name="Kanoh J."/>
            <person name="Kokubu A."/>
            <person name="Ebe M."/>
            <person name="Yanagida M."/>
        </authorList>
    </citation>
    <scope>IDENTIFICATION IN THE TORC2 COMPLEX</scope>
    <scope>IDENTIFICATION BY MASS SPECTROMETRY</scope>
</reference>
<reference key="9">
    <citation type="journal article" date="2007" name="Genetics">
        <title>Opposite effects of tor1 and tor2 on nitrogen starvation responses in fission yeast.</title>
        <authorList>
            <person name="Weisman R."/>
            <person name="Roitburg I."/>
            <person name="Schonbrun M."/>
            <person name="Harari R."/>
            <person name="Kupiec M."/>
        </authorList>
    </citation>
    <scope>FUNCTION</scope>
</reference>
<reference key="10">
    <citation type="journal article" date="2007" name="Mol. Cell. Biol.">
        <title>Loss of the TOR kinase Tor2 mimics nitrogen starvation and activates the sexual development pathway in fission yeast.</title>
        <authorList>
            <person name="Matsuo T."/>
            <person name="Otsubo Y."/>
            <person name="Urano J."/>
            <person name="Tamanoi F."/>
            <person name="Yamamoto M."/>
        </authorList>
    </citation>
    <scope>INTERACTION WITH POP3; SIN1 AND STE20</scope>
</reference>
<reference key="11">
    <citation type="journal article" date="2013" name="J. Cell Biol.">
        <title>Phosphorylation of the TOR ATP binding domain by AGC kinase constitutes a novel mode of TOR inhibition.</title>
        <authorList>
            <person name="Halova L."/>
            <person name="Du W."/>
            <person name="Kirkham S."/>
            <person name="Smith D.L."/>
            <person name="Petersen J."/>
        </authorList>
    </citation>
    <scope>PHOSPHORYLATION AT THR-1972</scope>
    <scope>MUTAGENESIS OF THR-1972</scope>
</reference>
<reference key="12">
    <citation type="journal article" date="2017" name="Elife">
        <title>Substrate specificity of TOR complex 2 is determined by a ubiquitin-fold domain of the Sin1 subunit.</title>
        <authorList>
            <person name="Tatebe H."/>
            <person name="Murayama S."/>
            <person name="Yonekura T."/>
            <person name="Hatano T."/>
            <person name="Richter D."/>
            <person name="Furuya T."/>
            <person name="Kataoka S."/>
            <person name="Furuita K."/>
            <person name="Kojima C."/>
            <person name="Shiozaki K."/>
        </authorList>
    </citation>
    <scope>FUNCTION</scope>
</reference>
<protein>
    <recommendedName>
        <fullName evidence="17">Serine/threonine-protein kinase tor1</fullName>
        <ecNumber evidence="18">2.7.11.1</ecNumber>
    </recommendedName>
    <alternativeName>
        <fullName>Phosphatidylinositol kinase homolog tor1</fullName>
    </alternativeName>
    <alternativeName>
        <fullName>Target of rapamycin kinase 1</fullName>
    </alternativeName>
</protein>
<accession>O14356</accession>
<name>TOR1_SCHPO</name>
<gene>
    <name evidence="15" type="primary">tor1</name>
    <name evidence="19" type="ORF">SPBC30D10.10c</name>
</gene>
<evidence type="ECO:0000255" key="1">
    <source>
        <dbReference type="PROSITE-ProRule" id="PRU00269"/>
    </source>
</evidence>
<evidence type="ECO:0000255" key="2">
    <source>
        <dbReference type="PROSITE-ProRule" id="PRU00534"/>
    </source>
</evidence>
<evidence type="ECO:0000255" key="3">
    <source>
        <dbReference type="PROSITE-ProRule" id="PRU00535"/>
    </source>
</evidence>
<evidence type="ECO:0000269" key="4">
    <source>
    </source>
</evidence>
<evidence type="ECO:0000269" key="5">
    <source>
    </source>
</evidence>
<evidence type="ECO:0000269" key="6">
    <source>
    </source>
</evidence>
<evidence type="ECO:0000269" key="7">
    <source>
    </source>
</evidence>
<evidence type="ECO:0000269" key="8">
    <source>
    </source>
</evidence>
<evidence type="ECO:0000269" key="9">
    <source>
    </source>
</evidence>
<evidence type="ECO:0000269" key="10">
    <source>
    </source>
</evidence>
<evidence type="ECO:0000269" key="11">
    <source>
    </source>
</evidence>
<evidence type="ECO:0000269" key="12">
    <source>
    </source>
</evidence>
<evidence type="ECO:0000269" key="13">
    <source>
    </source>
</evidence>
<evidence type="ECO:0000269" key="14">
    <source>
    </source>
</evidence>
<evidence type="ECO:0000303" key="15">
    <source>
    </source>
</evidence>
<evidence type="ECO:0000305" key="16"/>
<evidence type="ECO:0000305" key="17">
    <source>
    </source>
</evidence>
<evidence type="ECO:0000305" key="18">
    <source>
    </source>
</evidence>
<evidence type="ECO:0000312" key="19">
    <source>
        <dbReference type="PomBase" id="SPBC30D10.10c"/>
    </source>
</evidence>
<organism>
    <name type="scientific">Schizosaccharomyces pombe (strain 972 / ATCC 24843)</name>
    <name type="common">Fission yeast</name>
    <dbReference type="NCBI Taxonomy" id="284812"/>
    <lineage>
        <taxon>Eukaryota</taxon>
        <taxon>Fungi</taxon>
        <taxon>Dikarya</taxon>
        <taxon>Ascomycota</taxon>
        <taxon>Taphrinomycotina</taxon>
        <taxon>Schizosaccharomycetes</taxon>
        <taxon>Schizosaccharomycetales</taxon>
        <taxon>Schizosaccharomycetaceae</taxon>
        <taxon>Schizosaccharomyces</taxon>
    </lineage>
</organism>
<dbReference type="EC" id="2.7.11.1" evidence="18"/>
<dbReference type="EMBL" id="CU329671">
    <property type="protein sequence ID" value="CAB10805.1"/>
    <property type="molecule type" value="Genomic_DNA"/>
</dbReference>
<dbReference type="PIR" id="T40186">
    <property type="entry name" value="T40186"/>
</dbReference>
<dbReference type="RefSeq" id="NP_596275.1">
    <property type="nucleotide sequence ID" value="NM_001022196.2"/>
</dbReference>
<dbReference type="SMR" id="O14356"/>
<dbReference type="BioGRID" id="277001">
    <property type="interactions" value="186"/>
</dbReference>
<dbReference type="FunCoup" id="O14356">
    <property type="interactions" value="425"/>
</dbReference>
<dbReference type="IntAct" id="O14356">
    <property type="interactions" value="7"/>
</dbReference>
<dbReference type="STRING" id="284812.O14356"/>
<dbReference type="iPTMnet" id="O14356"/>
<dbReference type="PaxDb" id="4896-SPBC30D10.10c.1"/>
<dbReference type="EnsemblFungi" id="SPBC30D10.10c.1">
    <property type="protein sequence ID" value="SPBC30D10.10c.1:pep"/>
    <property type="gene ID" value="SPBC30D10.10c"/>
</dbReference>
<dbReference type="GeneID" id="2540473"/>
<dbReference type="KEGG" id="spo:2540473"/>
<dbReference type="PomBase" id="SPBC30D10.10c">
    <property type="gene designation" value="tor1"/>
</dbReference>
<dbReference type="VEuPathDB" id="FungiDB:SPBC30D10.10c"/>
<dbReference type="eggNOG" id="KOG0891">
    <property type="taxonomic scope" value="Eukaryota"/>
</dbReference>
<dbReference type="HOGENOM" id="CLU_000178_7_1_1"/>
<dbReference type="InParanoid" id="O14356"/>
<dbReference type="OMA" id="MWLRFVS"/>
<dbReference type="PhylomeDB" id="O14356"/>
<dbReference type="BRENDA" id="2.7.1.137">
    <property type="organism ID" value="5613"/>
</dbReference>
<dbReference type="PRO" id="PR:O14356"/>
<dbReference type="Proteomes" id="UP000002485">
    <property type="component" value="Chromosome II"/>
</dbReference>
<dbReference type="GO" id="GO:0000785">
    <property type="term" value="C:chromatin"/>
    <property type="evidence" value="ECO:0000314"/>
    <property type="project" value="PomBase"/>
</dbReference>
<dbReference type="GO" id="GO:0005737">
    <property type="term" value="C:cytoplasm"/>
    <property type="evidence" value="ECO:0000314"/>
    <property type="project" value="PomBase"/>
</dbReference>
<dbReference type="GO" id="GO:0005829">
    <property type="term" value="C:cytosol"/>
    <property type="evidence" value="ECO:0007005"/>
    <property type="project" value="PomBase"/>
</dbReference>
<dbReference type="GO" id="GO:0005634">
    <property type="term" value="C:nucleus"/>
    <property type="evidence" value="ECO:0000318"/>
    <property type="project" value="GO_Central"/>
</dbReference>
<dbReference type="GO" id="GO:0038201">
    <property type="term" value="C:TOR complex"/>
    <property type="evidence" value="ECO:0000318"/>
    <property type="project" value="GO_Central"/>
</dbReference>
<dbReference type="GO" id="GO:0031932">
    <property type="term" value="C:TORC2 complex"/>
    <property type="evidence" value="ECO:0000314"/>
    <property type="project" value="PomBase"/>
</dbReference>
<dbReference type="GO" id="GO:0005524">
    <property type="term" value="F:ATP binding"/>
    <property type="evidence" value="ECO:0007669"/>
    <property type="project" value="UniProtKB-KW"/>
</dbReference>
<dbReference type="GO" id="GO:0004672">
    <property type="term" value="F:protein kinase activity"/>
    <property type="evidence" value="ECO:0000314"/>
    <property type="project" value="PomBase"/>
</dbReference>
<dbReference type="GO" id="GO:0106310">
    <property type="term" value="F:protein serine kinase activity"/>
    <property type="evidence" value="ECO:0007669"/>
    <property type="project" value="RHEA"/>
</dbReference>
<dbReference type="GO" id="GO:0004674">
    <property type="term" value="F:protein serine/threonine kinase activity"/>
    <property type="evidence" value="ECO:0000314"/>
    <property type="project" value="PomBase"/>
</dbReference>
<dbReference type="GO" id="GO:0004712">
    <property type="term" value="F:protein serine/threonine/tyrosine kinase activity"/>
    <property type="evidence" value="ECO:0000315"/>
    <property type="project" value="PomBase"/>
</dbReference>
<dbReference type="GO" id="GO:0044877">
    <property type="term" value="F:protein-containing complex binding"/>
    <property type="evidence" value="ECO:0007669"/>
    <property type="project" value="InterPro"/>
</dbReference>
<dbReference type="GO" id="GO:0051321">
    <property type="term" value="P:meiotic cell cycle"/>
    <property type="evidence" value="ECO:0007669"/>
    <property type="project" value="UniProtKB-KW"/>
</dbReference>
<dbReference type="GO" id="GO:0010972">
    <property type="term" value="P:negative regulation of G2/M transition of mitotic cell cycle"/>
    <property type="evidence" value="ECO:0000315"/>
    <property type="project" value="PomBase"/>
</dbReference>
<dbReference type="GO" id="GO:0016242">
    <property type="term" value="P:negative regulation of macroautophagy"/>
    <property type="evidence" value="ECO:0000318"/>
    <property type="project" value="GO_Central"/>
</dbReference>
<dbReference type="GO" id="GO:0000122">
    <property type="term" value="P:negative regulation of transcription by RNA polymerase II"/>
    <property type="evidence" value="ECO:0000269"/>
    <property type="project" value="PomBase"/>
</dbReference>
<dbReference type="GO" id="GO:0010971">
    <property type="term" value="P:positive regulation of G2/M transition of mitotic cell cycle"/>
    <property type="evidence" value="ECO:0000315"/>
    <property type="project" value="PomBase"/>
</dbReference>
<dbReference type="GO" id="GO:1900237">
    <property type="term" value="P:positive regulation of induction of conjugation with cellular fusion"/>
    <property type="evidence" value="ECO:0000315"/>
    <property type="project" value="PomBase"/>
</dbReference>
<dbReference type="GO" id="GO:0045944">
    <property type="term" value="P:positive regulation of transcription by RNA polymerase II"/>
    <property type="evidence" value="ECO:0000315"/>
    <property type="project" value="PomBase"/>
</dbReference>
<dbReference type="GO" id="GO:0038202">
    <property type="term" value="P:TORC1 signaling"/>
    <property type="evidence" value="ECO:0000318"/>
    <property type="project" value="GO_Central"/>
</dbReference>
<dbReference type="GO" id="GO:0038203">
    <property type="term" value="P:TORC2 signaling"/>
    <property type="evidence" value="ECO:0000315"/>
    <property type="project" value="PomBase"/>
</dbReference>
<dbReference type="CDD" id="cd05169">
    <property type="entry name" value="PIKKc_TOR"/>
    <property type="match status" value="1"/>
</dbReference>
<dbReference type="FunFam" id="1.10.1070.11:FF:000007">
    <property type="entry name" value="Serine/threonine-protein kinase TOR"/>
    <property type="match status" value="1"/>
</dbReference>
<dbReference type="FunFam" id="1.20.120.150:FF:000001">
    <property type="entry name" value="Serine/threonine-protein kinase TOR"/>
    <property type="match status" value="1"/>
</dbReference>
<dbReference type="FunFam" id="1.25.10.10:FF:000371">
    <property type="entry name" value="Serine/threonine-protein kinase TOR"/>
    <property type="match status" value="1"/>
</dbReference>
<dbReference type="FunFam" id="1.25.10.10:FF:000582">
    <property type="entry name" value="Serine/threonine-protein kinase TOR"/>
    <property type="match status" value="1"/>
</dbReference>
<dbReference type="FunFam" id="1.25.40.10:FF:003516">
    <property type="entry name" value="Serine/threonine-protein kinase TOR"/>
    <property type="match status" value="1"/>
</dbReference>
<dbReference type="FunFam" id="3.30.1010.10:FF:000004">
    <property type="entry name" value="Serine/threonine-protein kinase TOR"/>
    <property type="match status" value="1"/>
</dbReference>
<dbReference type="Gene3D" id="1.20.120.150">
    <property type="entry name" value="FKBP12-rapamycin binding domain"/>
    <property type="match status" value="1"/>
</dbReference>
<dbReference type="Gene3D" id="1.25.10.10">
    <property type="entry name" value="Leucine-rich Repeat Variant"/>
    <property type="match status" value="3"/>
</dbReference>
<dbReference type="Gene3D" id="1.10.1070.11">
    <property type="entry name" value="Phosphatidylinositol 3-/4-kinase, catalytic domain"/>
    <property type="match status" value="1"/>
</dbReference>
<dbReference type="Gene3D" id="3.30.1010.10">
    <property type="entry name" value="Phosphatidylinositol 3-kinase Catalytic Subunit, Chain A, domain 4"/>
    <property type="match status" value="1"/>
</dbReference>
<dbReference type="Gene3D" id="1.25.40.10">
    <property type="entry name" value="Tetratricopeptide repeat domain"/>
    <property type="match status" value="1"/>
</dbReference>
<dbReference type="InterPro" id="IPR011989">
    <property type="entry name" value="ARM-like"/>
</dbReference>
<dbReference type="InterPro" id="IPR016024">
    <property type="entry name" value="ARM-type_fold"/>
</dbReference>
<dbReference type="InterPro" id="IPR050517">
    <property type="entry name" value="DDR_Repair_Kinase"/>
</dbReference>
<dbReference type="InterPro" id="IPR003152">
    <property type="entry name" value="FATC_dom"/>
</dbReference>
<dbReference type="InterPro" id="IPR009076">
    <property type="entry name" value="FRB_dom"/>
</dbReference>
<dbReference type="InterPro" id="IPR036738">
    <property type="entry name" value="FRB_sf"/>
</dbReference>
<dbReference type="InterPro" id="IPR011009">
    <property type="entry name" value="Kinase-like_dom_sf"/>
</dbReference>
<dbReference type="InterPro" id="IPR024585">
    <property type="entry name" value="mTOR_dom"/>
</dbReference>
<dbReference type="InterPro" id="IPR000403">
    <property type="entry name" value="PI3/4_kinase_cat_dom"/>
</dbReference>
<dbReference type="InterPro" id="IPR036940">
    <property type="entry name" value="PI3/4_kinase_cat_sf"/>
</dbReference>
<dbReference type="InterPro" id="IPR018936">
    <property type="entry name" value="PI3/4_kinase_CS"/>
</dbReference>
<dbReference type="InterPro" id="IPR003151">
    <property type="entry name" value="PIK-rel_kinase_FAT"/>
</dbReference>
<dbReference type="InterPro" id="IPR014009">
    <property type="entry name" value="PIK_FAT"/>
</dbReference>
<dbReference type="InterPro" id="IPR026683">
    <property type="entry name" value="TOR_cat"/>
</dbReference>
<dbReference type="InterPro" id="IPR011990">
    <property type="entry name" value="TPR-like_helical_dom_sf"/>
</dbReference>
<dbReference type="PANTHER" id="PTHR11139">
    <property type="entry name" value="ATAXIA TELANGIECTASIA MUTATED ATM -RELATED"/>
    <property type="match status" value="1"/>
</dbReference>
<dbReference type="PANTHER" id="PTHR11139:SF122">
    <property type="entry name" value="SERINE_THREONINE-PROTEIN KINASE TOR1"/>
    <property type="match status" value="1"/>
</dbReference>
<dbReference type="Pfam" id="PF02259">
    <property type="entry name" value="FAT"/>
    <property type="match status" value="1"/>
</dbReference>
<dbReference type="Pfam" id="PF02260">
    <property type="entry name" value="FATC"/>
    <property type="match status" value="1"/>
</dbReference>
<dbReference type="Pfam" id="PF08771">
    <property type="entry name" value="FRB_dom"/>
    <property type="match status" value="1"/>
</dbReference>
<dbReference type="Pfam" id="PF23593">
    <property type="entry name" value="HEAT_ATR"/>
    <property type="match status" value="1"/>
</dbReference>
<dbReference type="Pfam" id="PF11865">
    <property type="entry name" value="mTOR_dom"/>
    <property type="match status" value="1"/>
</dbReference>
<dbReference type="Pfam" id="PF00454">
    <property type="entry name" value="PI3_PI4_kinase"/>
    <property type="match status" value="1"/>
</dbReference>
<dbReference type="SMART" id="SM01346">
    <property type="entry name" value="DUF3385"/>
    <property type="match status" value="1"/>
</dbReference>
<dbReference type="SMART" id="SM01343">
    <property type="entry name" value="FATC"/>
    <property type="match status" value="1"/>
</dbReference>
<dbReference type="SMART" id="SM00146">
    <property type="entry name" value="PI3Kc"/>
    <property type="match status" value="1"/>
</dbReference>
<dbReference type="SMART" id="SM01345">
    <property type="entry name" value="Rapamycin_bind"/>
    <property type="match status" value="1"/>
</dbReference>
<dbReference type="SUPFAM" id="SSF48371">
    <property type="entry name" value="ARM repeat"/>
    <property type="match status" value="3"/>
</dbReference>
<dbReference type="SUPFAM" id="SSF47212">
    <property type="entry name" value="FKBP12-rapamycin-binding domain of FKBP-rapamycin-associated protein (FRAP)"/>
    <property type="match status" value="1"/>
</dbReference>
<dbReference type="SUPFAM" id="SSF56112">
    <property type="entry name" value="Protein kinase-like (PK-like)"/>
    <property type="match status" value="1"/>
</dbReference>
<dbReference type="PROSITE" id="PS51189">
    <property type="entry name" value="FAT"/>
    <property type="match status" value="1"/>
</dbReference>
<dbReference type="PROSITE" id="PS51190">
    <property type="entry name" value="FATC"/>
    <property type="match status" value="1"/>
</dbReference>
<dbReference type="PROSITE" id="PS00915">
    <property type="entry name" value="PI3_4_KINASE_1"/>
    <property type="match status" value="1"/>
</dbReference>
<dbReference type="PROSITE" id="PS00916">
    <property type="entry name" value="PI3_4_KINASE_2"/>
    <property type="match status" value="1"/>
</dbReference>
<dbReference type="PROSITE" id="PS50290">
    <property type="entry name" value="PI3_4_KINASE_3"/>
    <property type="match status" value="1"/>
</dbReference>
<keyword id="KW-0067">ATP-binding</keyword>
<keyword id="KW-0131">Cell cycle</keyword>
<keyword id="KW-0963">Cytoplasm</keyword>
<keyword id="KW-0418">Kinase</keyword>
<keyword id="KW-0469">Meiosis</keyword>
<keyword id="KW-0547">Nucleotide-binding</keyword>
<keyword id="KW-0597">Phosphoprotein</keyword>
<keyword id="KW-1185">Reference proteome</keyword>
<keyword id="KW-0677">Repeat</keyword>
<keyword id="KW-0723">Serine/threonine-protein kinase</keyword>
<keyword id="KW-0808">Transferase</keyword>
<proteinExistence type="evidence at protein level"/>
<feature type="chain" id="PRO_0000088812" description="Serine/threonine-protein kinase tor1">
    <location>
        <begin position="1"/>
        <end position="2335"/>
    </location>
</feature>
<feature type="repeat" description="HEAT 1">
    <location>
        <begin position="1"/>
        <end position="31"/>
    </location>
</feature>
<feature type="repeat" description="HEAT 2">
    <location>
        <begin position="164"/>
        <end position="201"/>
    </location>
</feature>
<feature type="repeat" description="HEAT 3">
    <location>
        <begin position="331"/>
        <end position="371"/>
    </location>
</feature>
<feature type="repeat" description="HEAT 4">
    <location>
        <begin position="410"/>
        <end position="449"/>
    </location>
</feature>
<feature type="repeat" description="HEAT 5">
    <location>
        <begin position="474"/>
        <end position="512"/>
    </location>
</feature>
<feature type="repeat" description="HEAT 6">
    <location>
        <begin position="522"/>
        <end position="560"/>
    </location>
</feature>
<feature type="repeat" description="HEAT 7">
    <location>
        <begin position="562"/>
        <end position="596"/>
    </location>
</feature>
<feature type="repeat" description="HEAT 8">
    <location>
        <begin position="642"/>
        <end position="679"/>
    </location>
</feature>
<feature type="repeat" description="HEAT 9">
    <location>
        <begin position="684"/>
        <end position="722"/>
    </location>
</feature>
<feature type="repeat" description="HEAT 10">
    <location>
        <begin position="728"/>
        <end position="766"/>
    </location>
</feature>
<feature type="repeat" description="HEAT 11">
    <location>
        <begin position="843"/>
        <end position="880"/>
    </location>
</feature>
<feature type="repeat" description="HEAT 12">
    <location>
        <begin position="904"/>
        <end position="923"/>
    </location>
</feature>
<feature type="repeat" description="HEAT 13">
    <location>
        <begin position="924"/>
        <end position="961"/>
    </location>
</feature>
<feature type="repeat" description="HEAT 14">
    <location>
        <begin position="964"/>
        <end position="1003"/>
    </location>
</feature>
<feature type="repeat" description="HEAT 15">
    <location>
        <begin position="1005"/>
        <end position="1042"/>
    </location>
</feature>
<feature type="domain" description="FAT" evidence="2">
    <location>
        <begin position="1226"/>
        <end position="1781"/>
    </location>
</feature>
<feature type="domain" description="PI3K/PI4K catalytic" evidence="1">
    <location>
        <begin position="1955"/>
        <end position="2269"/>
    </location>
</feature>
<feature type="domain" description="FATC" evidence="2 3">
    <location>
        <begin position="2303"/>
        <end position="2335"/>
    </location>
</feature>
<feature type="region of interest" description="G-loop" evidence="1">
    <location>
        <begin position="1961"/>
        <end position="1967"/>
    </location>
</feature>
<feature type="region of interest" description="Catalytic loop" evidence="1">
    <location>
        <begin position="2134"/>
        <end position="2142"/>
    </location>
</feature>
<feature type="region of interest" description="Activation loop" evidence="1">
    <location>
        <begin position="2154"/>
        <end position="2179"/>
    </location>
</feature>
<feature type="modified residue" description="Phosphothreonine; by PKB/AKT1" evidence="13">
    <location>
        <position position="1972"/>
    </location>
</feature>
<feature type="mutagenesis site" description="Increased mTOR kinase activity and stress resistance." evidence="13">
    <original>T</original>
    <variation>A</variation>
    <location>
        <position position="1972"/>
    </location>
</feature>
<comment type="function">
    <text evidence="4 5 6 7 10 14">Catalytic component of TORC2, which regulates multiple cellular processes to control cell growth in response to environmental signals (PubMed:11096119, PubMed:11409178, PubMed:12805221, PubMed:15466417, PubMed:17179073). In response to signals, TORC2 phosphorylates AGC protein kinase family members (PubMed:12805221, PubMed:28264193). TORC2 is required for cell survival under various stress conditions (PubMed:11096119, PubMed:11409178, PubMed:15466417, PubMed:17179073). TORC2 positively controls G1 cell-cycle arrest, sexual development and amino acid uptake (PubMed:11096119, PubMed:11409178, PubMed:15466417, PubMed:17179073). Positively regulates amino acid uptake through the control of expression of amino acid permeases (PubMed:11096119, PubMed:11409178, PubMed:15466417, PubMed:17179073). Responsible for the phosphorylation of AGC kinase gad8 at 'Ser-527' and 'Ser-546', activating gad8 kinase activity and promoting sexual development (PubMed:12805221, PubMed:28264193).</text>
</comment>
<comment type="catalytic activity">
    <reaction evidence="18">
        <text>L-seryl-[protein] + ATP = O-phospho-L-seryl-[protein] + ADP + H(+)</text>
        <dbReference type="Rhea" id="RHEA:17989"/>
        <dbReference type="Rhea" id="RHEA-COMP:9863"/>
        <dbReference type="Rhea" id="RHEA-COMP:11604"/>
        <dbReference type="ChEBI" id="CHEBI:15378"/>
        <dbReference type="ChEBI" id="CHEBI:29999"/>
        <dbReference type="ChEBI" id="CHEBI:30616"/>
        <dbReference type="ChEBI" id="CHEBI:83421"/>
        <dbReference type="ChEBI" id="CHEBI:456216"/>
        <dbReference type="EC" id="2.7.11.1"/>
    </reaction>
</comment>
<comment type="catalytic activity">
    <reaction evidence="18">
        <text>L-threonyl-[protein] + ATP = O-phospho-L-threonyl-[protein] + ADP + H(+)</text>
        <dbReference type="Rhea" id="RHEA:46608"/>
        <dbReference type="Rhea" id="RHEA-COMP:11060"/>
        <dbReference type="Rhea" id="RHEA-COMP:11605"/>
        <dbReference type="ChEBI" id="CHEBI:15378"/>
        <dbReference type="ChEBI" id="CHEBI:30013"/>
        <dbReference type="ChEBI" id="CHEBI:30616"/>
        <dbReference type="ChEBI" id="CHEBI:61977"/>
        <dbReference type="ChEBI" id="CHEBI:456216"/>
        <dbReference type="EC" id="2.7.11.1"/>
    </reaction>
</comment>
<comment type="subunit">
    <text evidence="9 11 12">The target of rapamycin complex 2 (TORC2) is composed of at least bit61, pop3/wat1, sin1, ste20 and tor1.</text>
</comment>
<comment type="interaction">
    <interactant intactId="EBI-2014420">
        <id>O14356</id>
    </interactant>
    <interactant intactId="EBI-2014377">
        <id>Q9P3W5</id>
        <label>tel2</label>
    </interactant>
    <organismsDiffer>false</organismsDiffer>
    <experiments>3</experiments>
</comment>
<comment type="subcellular location">
    <subcellularLocation>
        <location evidence="8">Cytoplasm</location>
    </subcellularLocation>
</comment>
<comment type="induction">
    <text evidence="4">By nitrogen and/or carbon starvation, cold, osmotic and oxidative stress.</text>
</comment>
<comment type="PTM">
    <text evidence="13">Phosphorylation at Thr-1972 in the ATP-binding region by AKT1 strongly reduces kinase activity.</text>
</comment>
<comment type="similarity">
    <text evidence="16">Belongs to the PI3/PI4-kinase family.</text>
</comment>
<sequence>MEYFSDLKNKNESIQLAAADQLKEFVHSSTKELSGESLARFNNDINRRIFELIHSHDSHERFGGILAIGKLIEFESEGDVTNLSRYANYLRMTLPSTDWHSMELSAKVLGHLAASGGTLAAEFVEFEVQRAFEWLQGDRQEQKRMAAILIIKALAQNSPTLVYLYISEIFQNLWTGLRDPKPLIRETAADALGASLDVVCQREAKVQLQCFNEVLLQAEHGLRQSSVEYLHGSLLAYKELFEKSGSFIREHYTEFCDLALRLREHRDNSIRRCIVFLLPTLSEYNPKKFQQRYLDSFMVYLLSHIRKDKEKSLAFEAIGRIAMAVNEAMIPYLQNILKVIRDTLTAKVREKTQYEKPVFECIGMLAAAVKLELLEDSRSLLGLIFSCELSVHLRQALVKMAENIPPLLAPIQERLLNMVSQILTGKNFEIRTNDTYTPSFTNIYSAREPDQRSKSTESIILALETLGTFNFTGYSLISFIQESVLSYLENDNSEIRIAAARTCCQVFARDPICRKTNPLAVESVAEVLEKLLTLGIADSDPKIRETVLSLLDERFDRHLAHPDNIRCLFIALNDEVFSIREIAIIIIGRLALYNPAHVMPSLRKTIIQLLSDMEYSGNSRQKEESAQLLKLLVSKARTLIKPYIQSIIHVILPKAADTSPGVSSAIISALGELASVEGEDMPVDVRGSFMKLILVNLQDQSSTLKRLASLKCLRKLCGRSGYVIQPYLDYPPLLGALIGILQSEQPTPIRREVLRTLGVLGALDPYTYLTTEEVSDDLQSSHNNAHGVPQISAAQYPSLENYAMVAVVTLIGILKDSSLSMHHSSVVQAVMHICSQMGSKSTVFLPQVVPTFLQVMQSLSASSAEFYFQQLTTLTSIIGPNIRDYVSDIFNLSKVFWESTTSLLLVILELIDAIAIALQDEFKFYLPQILSCMLKAFSLDNTSSRSVSYKVLQSFVIFGSNIEEYMHLVLPVIIRSFERDTIPLGFRKSALKCIAQLFQSVNFSDHASRIIHPLVRMLGKSNGDLRAVIMDTLCAIVSQLGYDYSIFIPMVNKVLVSHKISHPAYELLVSRLLKGEPLPKDVVVKEFKPRPSTKPFSTQDEVLTKLPVDQASLKAAWESSQKLTRDDWQDWIRRISIELLKESPSSALRSCSTLAGIYHPLARDLFNVSFLSCWDELTESNKKNLVKSIELAMNAPNISVEILQTLLNLAEYMEREDHTLPIPIKVISAHASKCNVYAKALHYTELQFVQETKEEVSISTIESLITINNHLQQSDAAVGMLQYTKEHKQFSLKETWYEKLHRWDDALAAYEHREREGDSSFEINIGKLRCYYALGDWDHLSELAQKAWVTSEQEHREAIAPLAAAAAWGLGQWNLISEYVSAMDRDPQDKEFFSAISAVHLGQYNKAYGHIERHRDILVNDLSSIIGESYNRAYGIMVKSQMLSELEEIIDYKKNMQYENNLDSLKKTWRKRLEGCQKNVDVWHNTLRFRALVLSPQDSPEMWIKLADLCRRSDRLKLSNQCLTYLMGRDPSNAYPLDSLKLLNPHVVYTYLKYLWATDQKNIAVSELEEFTSYLSSKHGYKMGDSSKLVDILASSSVSSEERSFLARCFHKLGKWKKSLQDSVNQESVRDILNCYFYATLFDKSWYKAWHSWALANFEVVGYYEQTEHGVTQDMYEQYIVPAIKGFFHSSVLNQKNSLQDILRLLNLWFKFGEHSDVAAAIVEGFSNVPMDTWLEVIPQLIARIHTSSSSVRASVHQLLSDIGRVHPQALVYSLTVSSKSTNPQQKHSAKSIMDSMLSHSDTLVRQALLVSQELIRVAILWHELWYEGLEEASQAYFSDHDISLMIDIVKPLHETLEKGPSTLSEISFAQTFGYDLRKARSYWQKFLQDGDPTELNQSWDLYYQVFRRIQKQLPRIKHLELQYVSPKLLDACDLELAVPGTYGHNKPVIRISHFHHTFEVISSKQRPRRLTIHGSDGKDYQYVLKGHEDLRQDERVMQLFGLCNTLLTTDSETFKRRLNIERYTVIPLSPNSGLLGWVPHSDTLHFLIKEFRSKRNILLNLEHRMMLQMAPDCDSLTLLQKLEVFEYVMANTDGYDLYHVLWLKSRSSEAWLDRRTSYTQSLAVMSMVGYILGLGDRHPSNLMMDRYSGKIIHIDFGDCFEVAMHREKFPEKIPFRLTRMLINAMEVSGIQGTYKITCELVMRVLRSNTESLMAVLEAFVYDPLINWRLMTKSSFGASTTLRPTSSSVEEKGRSYTHRARHADYAALSETNGVNAEGLNERSIQVLKRVSNKLTGKDFDLKEQLPVKAQVEKLIQQATAPENLCRCYVGWCSFW</sequence>